<gene>
    <name evidence="1" type="primary">ureF1</name>
    <name type="ordered locus">BSUIS_A0295</name>
</gene>
<sequence length="228" mass="24428">MIIITPITNDPTTALLRLMAWLSPVFPVGSFSYSHGLERAVHDGLVVDAAGLQDWLQWLVRRGSGWNDAVLCAESWRCAMKGEDLHEIAELAEALAGSRERHMETMLQGGAFLAAARSWPCEIFDRLPPDCAYPVAVGAVAGGHGVPLAQALAAFLQAFCINLLQASIRLSVTGQSGVTAIMAALEPVLGETAARAALSSMEDLGSATFIADIMAMKHETQHSRLFRS</sequence>
<feature type="chain" id="PRO_0000344094" description="Urease accessory protein UreF 1">
    <location>
        <begin position="1"/>
        <end position="228"/>
    </location>
</feature>
<organism>
    <name type="scientific">Brucella suis (strain ATCC 23445 / NCTC 10510)</name>
    <dbReference type="NCBI Taxonomy" id="470137"/>
    <lineage>
        <taxon>Bacteria</taxon>
        <taxon>Pseudomonadati</taxon>
        <taxon>Pseudomonadota</taxon>
        <taxon>Alphaproteobacteria</taxon>
        <taxon>Hyphomicrobiales</taxon>
        <taxon>Brucellaceae</taxon>
        <taxon>Brucella/Ochrobactrum group</taxon>
        <taxon>Brucella</taxon>
    </lineage>
</organism>
<protein>
    <recommendedName>
        <fullName evidence="1">Urease accessory protein UreF 1</fullName>
    </recommendedName>
</protein>
<comment type="function">
    <text evidence="1">Required for maturation of urease via the functional incorporation of the urease nickel metallocenter.</text>
</comment>
<comment type="subunit">
    <text evidence="1">UreD, UreF and UreG form a complex that acts as a GTP-hydrolysis-dependent molecular chaperone, activating the urease apoprotein by helping to assemble the nickel containing metallocenter of UreC. The UreE protein probably delivers the nickel.</text>
</comment>
<comment type="subcellular location">
    <subcellularLocation>
        <location evidence="1">Cytoplasm</location>
    </subcellularLocation>
</comment>
<comment type="similarity">
    <text evidence="1">Belongs to the UreF family.</text>
</comment>
<keyword id="KW-0143">Chaperone</keyword>
<keyword id="KW-0963">Cytoplasm</keyword>
<keyword id="KW-0996">Nickel insertion</keyword>
<proteinExistence type="inferred from homology"/>
<reference key="1">
    <citation type="submission" date="2007-12" db="EMBL/GenBank/DDBJ databases">
        <title>Brucella suis ATCC 23445 whole genome shotgun sequencing project.</title>
        <authorList>
            <person name="Setubal J.C."/>
            <person name="Bowns C."/>
            <person name="Boyle S."/>
            <person name="Crasta O.R."/>
            <person name="Czar M.J."/>
            <person name="Dharmanolla C."/>
            <person name="Gillespie J.J."/>
            <person name="Kenyon R.W."/>
            <person name="Lu J."/>
            <person name="Mane S."/>
            <person name="Mohapatra S."/>
            <person name="Nagrani S."/>
            <person name="Purkayastha A."/>
            <person name="Rajasimha H.K."/>
            <person name="Shallom J.M."/>
            <person name="Shallom S."/>
            <person name="Shukla M."/>
            <person name="Snyder E.E."/>
            <person name="Sobral B.W."/>
            <person name="Wattam A.R."/>
            <person name="Will R."/>
            <person name="Williams K."/>
            <person name="Yoo H."/>
            <person name="Bruce D."/>
            <person name="Detter C."/>
            <person name="Munk C."/>
            <person name="Brettin T.S."/>
        </authorList>
    </citation>
    <scope>NUCLEOTIDE SEQUENCE [LARGE SCALE GENOMIC DNA]</scope>
    <source>
        <strain>ATCC 23445 / NCTC 10510</strain>
    </source>
</reference>
<dbReference type="EMBL" id="CP000911">
    <property type="protein sequence ID" value="ABY37390.1"/>
    <property type="molecule type" value="Genomic_DNA"/>
</dbReference>
<dbReference type="RefSeq" id="WP_004690532.1">
    <property type="nucleotide sequence ID" value="NC_010169.1"/>
</dbReference>
<dbReference type="SMR" id="B0CJP9"/>
<dbReference type="KEGG" id="bmt:BSUIS_A0295"/>
<dbReference type="HOGENOM" id="CLU_049215_2_0_5"/>
<dbReference type="Proteomes" id="UP000008545">
    <property type="component" value="Chromosome I"/>
</dbReference>
<dbReference type="GO" id="GO:0005737">
    <property type="term" value="C:cytoplasm"/>
    <property type="evidence" value="ECO:0007669"/>
    <property type="project" value="UniProtKB-SubCell"/>
</dbReference>
<dbReference type="GO" id="GO:0016151">
    <property type="term" value="F:nickel cation binding"/>
    <property type="evidence" value="ECO:0007669"/>
    <property type="project" value="UniProtKB-UniRule"/>
</dbReference>
<dbReference type="Gene3D" id="1.10.4190.10">
    <property type="entry name" value="Urease accessory protein UreF"/>
    <property type="match status" value="1"/>
</dbReference>
<dbReference type="HAMAP" id="MF_01385">
    <property type="entry name" value="UreF"/>
    <property type="match status" value="1"/>
</dbReference>
<dbReference type="InterPro" id="IPR002639">
    <property type="entry name" value="UreF"/>
</dbReference>
<dbReference type="InterPro" id="IPR038277">
    <property type="entry name" value="UreF_sf"/>
</dbReference>
<dbReference type="PANTHER" id="PTHR33620">
    <property type="entry name" value="UREASE ACCESSORY PROTEIN F"/>
    <property type="match status" value="1"/>
</dbReference>
<dbReference type="PANTHER" id="PTHR33620:SF1">
    <property type="entry name" value="UREASE ACCESSORY PROTEIN F"/>
    <property type="match status" value="1"/>
</dbReference>
<dbReference type="Pfam" id="PF01730">
    <property type="entry name" value="UreF"/>
    <property type="match status" value="1"/>
</dbReference>
<dbReference type="PIRSF" id="PIRSF009467">
    <property type="entry name" value="Ureas_acces_UreF"/>
    <property type="match status" value="1"/>
</dbReference>
<evidence type="ECO:0000255" key="1">
    <source>
        <dbReference type="HAMAP-Rule" id="MF_01385"/>
    </source>
</evidence>
<accession>B0CJP9</accession>
<name>UREF1_BRUSI</name>